<reference key="1">
    <citation type="journal article" date="2006" name="J. Bacteriol.">
        <title>Complete genome sequence of Yersinia pestis strains Antiqua and Nepal516: evidence of gene reduction in an emerging pathogen.</title>
        <authorList>
            <person name="Chain P.S.G."/>
            <person name="Hu P."/>
            <person name="Malfatti S.A."/>
            <person name="Radnedge L."/>
            <person name="Larimer F."/>
            <person name="Vergez L.M."/>
            <person name="Worsham P."/>
            <person name="Chu M.C."/>
            <person name="Andersen G.L."/>
        </authorList>
    </citation>
    <scope>NUCLEOTIDE SEQUENCE [LARGE SCALE GENOMIC DNA]</scope>
    <source>
        <strain>Antiqua</strain>
    </source>
</reference>
<organism>
    <name type="scientific">Yersinia pestis bv. Antiqua (strain Antiqua)</name>
    <dbReference type="NCBI Taxonomy" id="360102"/>
    <lineage>
        <taxon>Bacteria</taxon>
        <taxon>Pseudomonadati</taxon>
        <taxon>Pseudomonadota</taxon>
        <taxon>Gammaproteobacteria</taxon>
        <taxon>Enterobacterales</taxon>
        <taxon>Yersiniaceae</taxon>
        <taxon>Yersinia</taxon>
    </lineage>
</organism>
<keyword id="KW-0067">ATP-binding</keyword>
<keyword id="KW-0460">Magnesium</keyword>
<keyword id="KW-0511">Multifunctional enzyme</keyword>
<keyword id="KW-0547">Nucleotide-binding</keyword>
<keyword id="KW-0548">Nucleotidyltransferase</keyword>
<keyword id="KW-0808">Transferase</keyword>
<accession>Q1C373</accession>
<evidence type="ECO:0000255" key="1">
    <source>
        <dbReference type="HAMAP-Rule" id="MF_00802"/>
    </source>
</evidence>
<name>GLNE_YERPA</name>
<dbReference type="EC" id="2.7.7.89" evidence="1"/>
<dbReference type="EC" id="2.7.7.42" evidence="1"/>
<dbReference type="EMBL" id="CP000308">
    <property type="protein sequence ID" value="ABG15099.1"/>
    <property type="molecule type" value="Genomic_DNA"/>
</dbReference>
<dbReference type="RefSeq" id="WP_002212194.1">
    <property type="nucleotide sequence ID" value="NZ_CP009906.1"/>
</dbReference>
<dbReference type="SMR" id="Q1C373"/>
<dbReference type="GeneID" id="57973971"/>
<dbReference type="KEGG" id="ypa:YPA_3137"/>
<dbReference type="Proteomes" id="UP000001971">
    <property type="component" value="Chromosome"/>
</dbReference>
<dbReference type="GO" id="GO:0005829">
    <property type="term" value="C:cytosol"/>
    <property type="evidence" value="ECO:0007669"/>
    <property type="project" value="TreeGrafter"/>
</dbReference>
<dbReference type="GO" id="GO:0008882">
    <property type="term" value="F:[glutamate-ammonia-ligase] adenylyltransferase activity"/>
    <property type="evidence" value="ECO:0007669"/>
    <property type="project" value="UniProtKB-UniRule"/>
</dbReference>
<dbReference type="GO" id="GO:0047388">
    <property type="term" value="F:[glutamine synthetase]-adenylyl-L-tyrosine phosphorylase activity"/>
    <property type="evidence" value="ECO:0007669"/>
    <property type="project" value="UniProtKB-EC"/>
</dbReference>
<dbReference type="GO" id="GO:0005524">
    <property type="term" value="F:ATP binding"/>
    <property type="evidence" value="ECO:0007669"/>
    <property type="project" value="UniProtKB-UniRule"/>
</dbReference>
<dbReference type="GO" id="GO:0000287">
    <property type="term" value="F:magnesium ion binding"/>
    <property type="evidence" value="ECO:0007669"/>
    <property type="project" value="UniProtKB-UniRule"/>
</dbReference>
<dbReference type="GO" id="GO:0000820">
    <property type="term" value="P:regulation of glutamine family amino acid metabolic process"/>
    <property type="evidence" value="ECO:0007669"/>
    <property type="project" value="UniProtKB-UniRule"/>
</dbReference>
<dbReference type="CDD" id="cd05401">
    <property type="entry name" value="NT_GlnE_GlnD_like"/>
    <property type="match status" value="2"/>
</dbReference>
<dbReference type="FunFam" id="1.10.4050.10:FF:000001">
    <property type="entry name" value="Bifunctional glutamine synthetase adenylyltransferase/adenylyl-removing enzyme"/>
    <property type="match status" value="1"/>
</dbReference>
<dbReference type="FunFam" id="1.20.120.1510:FF:000001">
    <property type="entry name" value="Bifunctional glutamine synthetase adenylyltransferase/adenylyl-removing enzyme"/>
    <property type="match status" value="1"/>
</dbReference>
<dbReference type="FunFam" id="1.20.120.330:FF:000005">
    <property type="entry name" value="Bifunctional glutamine synthetase adenylyltransferase/adenylyl-removing enzyme"/>
    <property type="match status" value="1"/>
</dbReference>
<dbReference type="FunFam" id="1.20.120.330:FF:000008">
    <property type="entry name" value="Bifunctional glutamine synthetase adenylyltransferase/adenylyl-removing enzyme"/>
    <property type="match status" value="1"/>
</dbReference>
<dbReference type="FunFam" id="3.30.460.10:FF:000009">
    <property type="entry name" value="Bifunctional glutamine synthetase adenylyltransferase/adenylyl-removing enzyme"/>
    <property type="match status" value="1"/>
</dbReference>
<dbReference type="FunFam" id="3.30.460.10:FF:000014">
    <property type="entry name" value="Bifunctional glutamine synthetase adenylyltransferase/adenylyl-removing enzyme"/>
    <property type="match status" value="1"/>
</dbReference>
<dbReference type="Gene3D" id="1.20.120.1510">
    <property type="match status" value="1"/>
</dbReference>
<dbReference type="Gene3D" id="3.30.460.10">
    <property type="entry name" value="Beta Polymerase, domain 2"/>
    <property type="match status" value="2"/>
</dbReference>
<dbReference type="Gene3D" id="1.10.4050.10">
    <property type="entry name" value="Glutamine synthase adenylyltransferase GlnE"/>
    <property type="match status" value="1"/>
</dbReference>
<dbReference type="Gene3D" id="1.20.120.330">
    <property type="entry name" value="Nucleotidyltransferases domain 2"/>
    <property type="match status" value="2"/>
</dbReference>
<dbReference type="HAMAP" id="MF_00802">
    <property type="entry name" value="GlnE"/>
    <property type="match status" value="1"/>
</dbReference>
<dbReference type="InterPro" id="IPR023057">
    <property type="entry name" value="GlnE"/>
</dbReference>
<dbReference type="InterPro" id="IPR005190">
    <property type="entry name" value="GlnE_rpt_dom"/>
</dbReference>
<dbReference type="InterPro" id="IPR043519">
    <property type="entry name" value="NT_sf"/>
</dbReference>
<dbReference type="InterPro" id="IPR013546">
    <property type="entry name" value="PII_UdlTrfase/GS_AdlTrfase"/>
</dbReference>
<dbReference type="NCBIfam" id="NF008292">
    <property type="entry name" value="PRK11072.1"/>
    <property type="match status" value="1"/>
</dbReference>
<dbReference type="PANTHER" id="PTHR30621:SF0">
    <property type="entry name" value="BIFUNCTIONAL GLUTAMINE SYNTHETASE ADENYLYLTRANSFERASE_ADENYLYL-REMOVING ENZYME"/>
    <property type="match status" value="1"/>
</dbReference>
<dbReference type="PANTHER" id="PTHR30621">
    <property type="entry name" value="GLUTAMINE SYNTHETASE ADENYLYLTRANSFERASE"/>
    <property type="match status" value="1"/>
</dbReference>
<dbReference type="Pfam" id="PF08335">
    <property type="entry name" value="GlnD_UR_UTase"/>
    <property type="match status" value="2"/>
</dbReference>
<dbReference type="Pfam" id="PF03710">
    <property type="entry name" value="GlnE"/>
    <property type="match status" value="2"/>
</dbReference>
<dbReference type="SUPFAM" id="SSF81301">
    <property type="entry name" value="Nucleotidyltransferase"/>
    <property type="match status" value="2"/>
</dbReference>
<dbReference type="SUPFAM" id="SSF81593">
    <property type="entry name" value="Nucleotidyltransferase substrate binding subunit/domain"/>
    <property type="match status" value="2"/>
</dbReference>
<proteinExistence type="inferred from homology"/>
<protein>
    <recommendedName>
        <fullName evidence="1">Bifunctional glutamine synthetase adenylyltransferase/adenylyl-removing enzyme</fullName>
    </recommendedName>
    <alternativeName>
        <fullName evidence="1">ATP:glutamine synthetase adenylyltransferase</fullName>
    </alternativeName>
    <alternativeName>
        <fullName evidence="1">ATase</fullName>
    </alternativeName>
    <domain>
        <recommendedName>
            <fullName evidence="1">Glutamine synthetase adenylyl-L-tyrosine phosphorylase</fullName>
            <ecNumber evidence="1">2.7.7.89</ecNumber>
        </recommendedName>
        <alternativeName>
            <fullName evidence="1">Adenylyl removase</fullName>
            <shortName evidence="1">AR</shortName>
            <shortName evidence="1">AT-N</shortName>
        </alternativeName>
    </domain>
    <domain>
        <recommendedName>
            <fullName evidence="1">Glutamine synthetase adenylyl transferase</fullName>
            <ecNumber evidence="1">2.7.7.42</ecNumber>
        </recommendedName>
        <alternativeName>
            <fullName evidence="1">Adenylyl transferase</fullName>
            <shortName evidence="1">AT</shortName>
            <shortName evidence="1">AT-C</shortName>
        </alternativeName>
    </domain>
</protein>
<comment type="function">
    <text evidence="1">Involved in the regulation of glutamine synthetase GlnA, a key enzyme in the process to assimilate ammonia. When cellular nitrogen levels are high, the C-terminal adenylyl transferase (AT) inactivates GlnA by covalent transfer of an adenylyl group from ATP to specific tyrosine residue of GlnA, thus reducing its activity. Conversely, when nitrogen levels are low, the N-terminal adenylyl removase (AR) activates GlnA by removing the adenylyl group by phosphorolysis, increasing its activity. The regulatory region of GlnE binds the signal transduction protein PII (GlnB) which indicates the nitrogen status of the cell.</text>
</comment>
<comment type="catalytic activity">
    <reaction evidence="1">
        <text>[glutamine synthetase]-O(4)-(5'-adenylyl)-L-tyrosine + phosphate = [glutamine synthetase]-L-tyrosine + ADP</text>
        <dbReference type="Rhea" id="RHEA:43716"/>
        <dbReference type="Rhea" id="RHEA-COMP:10660"/>
        <dbReference type="Rhea" id="RHEA-COMP:10661"/>
        <dbReference type="ChEBI" id="CHEBI:43474"/>
        <dbReference type="ChEBI" id="CHEBI:46858"/>
        <dbReference type="ChEBI" id="CHEBI:83624"/>
        <dbReference type="ChEBI" id="CHEBI:456216"/>
        <dbReference type="EC" id="2.7.7.89"/>
    </reaction>
</comment>
<comment type="catalytic activity">
    <reaction evidence="1">
        <text>[glutamine synthetase]-L-tyrosine + ATP = [glutamine synthetase]-O(4)-(5'-adenylyl)-L-tyrosine + diphosphate</text>
        <dbReference type="Rhea" id="RHEA:18589"/>
        <dbReference type="Rhea" id="RHEA-COMP:10660"/>
        <dbReference type="Rhea" id="RHEA-COMP:10661"/>
        <dbReference type="ChEBI" id="CHEBI:30616"/>
        <dbReference type="ChEBI" id="CHEBI:33019"/>
        <dbReference type="ChEBI" id="CHEBI:46858"/>
        <dbReference type="ChEBI" id="CHEBI:83624"/>
        <dbReference type="EC" id="2.7.7.42"/>
    </reaction>
</comment>
<comment type="cofactor">
    <cofactor evidence="1">
        <name>Mg(2+)</name>
        <dbReference type="ChEBI" id="CHEBI:18420"/>
    </cofactor>
</comment>
<comment type="similarity">
    <text evidence="1">Belongs to the GlnE family.</text>
</comment>
<gene>
    <name evidence="1" type="primary">glnE</name>
    <name type="ordered locus">YPA_3137</name>
</gene>
<sequence>MLPLPSELQIQAQSIKQRFSELPAPPDLRDEDIAVLALSDFVSDMLLIHPQWLEELHQQPPQPQEWQYYSQWLSQALAGVQDEAALLTALRLFRRRVMVRIAWSQVLQTSGTAETLQQLSTLAESMIIAARDWLYQVCCRELGTPCNRQGVPQPLLILGMGKLGGGELNFSSDIDLIFAYPENGQTQGGRRELDNAQFFTRLGQRLIKALDQHTIDGFVYRVDMRLRPFGDSGPLVLSFAALEDYYQEQGRDWERYAMVKARLMGGADDPYSQELRQMLRPFVFRRYIDFSVIQSLRNMKGMIAREVRRRGLKDNIKLGAGGIREIEFITQVFQLIRGGREPRLQERALLPTLQAVAELGLLPEQQVADLSGSYLFLRRLENLLQAIADEQTQTLPNDPLNQARLAWGMGYADWAAMSTALENHMQAVRVVFDDLIGDETPDIGEDPSHGLYKSLWQDVLEESDLAPLTPHLEEAARRQLLATISGFRHDVDKRTIGPRGREVLDQLMPRLFAEVCPRPDANVALSRLILLLLSIVTRTTYLELLVEYHAALKHVIRLCSASPMVASQLARYPLLLDELLDPQSLYQPLAPSAYRDELRQYLLRVPEDDEEQQLEALRQFKQAQQLRIAAGDITEALPVMKVSDHLTYLAEAIIDAVIQQAWNQMVARYGQPSHLQQSEGRGFAVIGYGKLGGWELGYSSDLDLVFLLDCPLDVMTDGDRSIDGRQFYLRLAQRIMHLFSTRTSSGILYEVDARLRPSGEAGMLVSTIEAFADYQRNEAWTWEHQALVRARIVYGSPKLHQQFDAIRQQILCRHREDPQLQQEVREMREKMRNHLGSKQRDIFDIKADAGGITDIEFIAQYLVLRYAASEPRLTRWSDNVRIFESMAHYDIMSPEEAAALTRAYVTMRDEIHHLALQEQSSKVAADSFIAEREQVAASWHKWLAANDANVS</sequence>
<feature type="chain" id="PRO_1000047021" description="Bifunctional glutamine synthetase adenylyltransferase/adenylyl-removing enzyme">
    <location>
        <begin position="1"/>
        <end position="951"/>
    </location>
</feature>
<feature type="region of interest" description="Adenylyl removase" evidence="1">
    <location>
        <begin position="1"/>
        <end position="440"/>
    </location>
</feature>
<feature type="region of interest" description="Adenylyl transferase" evidence="1">
    <location>
        <begin position="449"/>
        <end position="951"/>
    </location>
</feature>